<evidence type="ECO:0000255" key="1">
    <source>
        <dbReference type="HAMAP-Rule" id="MF_00141"/>
    </source>
</evidence>
<organism>
    <name type="scientific">Magnetococcus marinus (strain ATCC BAA-1437 / JCM 17883 / MC-1)</name>
    <dbReference type="NCBI Taxonomy" id="156889"/>
    <lineage>
        <taxon>Bacteria</taxon>
        <taxon>Pseudomonadati</taxon>
        <taxon>Pseudomonadota</taxon>
        <taxon>Alphaproteobacteria</taxon>
        <taxon>Magnetococcales</taxon>
        <taxon>Magnetococcaceae</taxon>
        <taxon>Magnetococcus</taxon>
    </lineage>
</organism>
<reference key="1">
    <citation type="journal article" date="2009" name="Appl. Environ. Microbiol.">
        <title>Complete genome sequence of the chemolithoautotrophic marine magnetotactic coccus strain MC-1.</title>
        <authorList>
            <person name="Schubbe S."/>
            <person name="Williams T.J."/>
            <person name="Xie G."/>
            <person name="Kiss H.E."/>
            <person name="Brettin T.S."/>
            <person name="Martinez D."/>
            <person name="Ross C.A."/>
            <person name="Schuler D."/>
            <person name="Cox B.L."/>
            <person name="Nealson K.H."/>
            <person name="Bazylinski D.A."/>
        </authorList>
    </citation>
    <scope>NUCLEOTIDE SEQUENCE [LARGE SCALE GENOMIC DNA]</scope>
    <source>
        <strain>ATCC BAA-1437 / JCM 17883 / MC-1</strain>
    </source>
</reference>
<name>EFP_MAGMM</name>
<protein>
    <recommendedName>
        <fullName evidence="1">Elongation factor P</fullName>
        <shortName evidence="1">EF-P</shortName>
    </recommendedName>
</protein>
<keyword id="KW-0963">Cytoplasm</keyword>
<keyword id="KW-0251">Elongation factor</keyword>
<keyword id="KW-0648">Protein biosynthesis</keyword>
<keyword id="KW-1185">Reference proteome</keyword>
<dbReference type="EMBL" id="CP000471">
    <property type="protein sequence ID" value="ABK43466.1"/>
    <property type="molecule type" value="Genomic_DNA"/>
</dbReference>
<dbReference type="RefSeq" id="WP_011712623.1">
    <property type="nucleotide sequence ID" value="NC_008576.1"/>
</dbReference>
<dbReference type="SMR" id="A0L673"/>
<dbReference type="STRING" id="156889.Mmc1_0948"/>
<dbReference type="KEGG" id="mgm:Mmc1_0948"/>
<dbReference type="eggNOG" id="COG0231">
    <property type="taxonomic scope" value="Bacteria"/>
</dbReference>
<dbReference type="HOGENOM" id="CLU_074944_0_0_5"/>
<dbReference type="OrthoDB" id="9801844at2"/>
<dbReference type="UniPathway" id="UPA00345"/>
<dbReference type="Proteomes" id="UP000002586">
    <property type="component" value="Chromosome"/>
</dbReference>
<dbReference type="GO" id="GO:0005737">
    <property type="term" value="C:cytoplasm"/>
    <property type="evidence" value="ECO:0007669"/>
    <property type="project" value="UniProtKB-SubCell"/>
</dbReference>
<dbReference type="GO" id="GO:0003746">
    <property type="term" value="F:translation elongation factor activity"/>
    <property type="evidence" value="ECO:0007669"/>
    <property type="project" value="UniProtKB-UniRule"/>
</dbReference>
<dbReference type="GO" id="GO:0043043">
    <property type="term" value="P:peptide biosynthetic process"/>
    <property type="evidence" value="ECO:0007669"/>
    <property type="project" value="InterPro"/>
</dbReference>
<dbReference type="CDD" id="cd04470">
    <property type="entry name" value="S1_EF-P_repeat_1"/>
    <property type="match status" value="1"/>
</dbReference>
<dbReference type="CDD" id="cd05794">
    <property type="entry name" value="S1_EF-P_repeat_2"/>
    <property type="match status" value="1"/>
</dbReference>
<dbReference type="FunFam" id="2.30.30.30:FF:000003">
    <property type="entry name" value="Elongation factor P"/>
    <property type="match status" value="1"/>
</dbReference>
<dbReference type="FunFam" id="2.40.50.140:FF:000004">
    <property type="entry name" value="Elongation factor P"/>
    <property type="match status" value="1"/>
</dbReference>
<dbReference type="FunFam" id="2.40.50.140:FF:000009">
    <property type="entry name" value="Elongation factor P"/>
    <property type="match status" value="1"/>
</dbReference>
<dbReference type="Gene3D" id="2.30.30.30">
    <property type="match status" value="1"/>
</dbReference>
<dbReference type="Gene3D" id="2.40.50.140">
    <property type="entry name" value="Nucleic acid-binding proteins"/>
    <property type="match status" value="2"/>
</dbReference>
<dbReference type="HAMAP" id="MF_00141">
    <property type="entry name" value="EF_P"/>
    <property type="match status" value="1"/>
</dbReference>
<dbReference type="InterPro" id="IPR015365">
    <property type="entry name" value="Elong-fact-P_C"/>
</dbReference>
<dbReference type="InterPro" id="IPR012340">
    <property type="entry name" value="NA-bd_OB-fold"/>
</dbReference>
<dbReference type="InterPro" id="IPR014722">
    <property type="entry name" value="Rib_uL2_dom2"/>
</dbReference>
<dbReference type="InterPro" id="IPR020599">
    <property type="entry name" value="Transl_elong_fac_P/YeiP"/>
</dbReference>
<dbReference type="InterPro" id="IPR013185">
    <property type="entry name" value="Transl_elong_KOW-like"/>
</dbReference>
<dbReference type="InterPro" id="IPR001059">
    <property type="entry name" value="Transl_elong_P/YeiP_cen"/>
</dbReference>
<dbReference type="InterPro" id="IPR013852">
    <property type="entry name" value="Transl_elong_P/YeiP_CS"/>
</dbReference>
<dbReference type="InterPro" id="IPR011768">
    <property type="entry name" value="Transl_elongation_fac_P"/>
</dbReference>
<dbReference type="InterPro" id="IPR008991">
    <property type="entry name" value="Translation_prot_SH3-like_sf"/>
</dbReference>
<dbReference type="NCBIfam" id="TIGR00038">
    <property type="entry name" value="efp"/>
    <property type="match status" value="1"/>
</dbReference>
<dbReference type="NCBIfam" id="NF001810">
    <property type="entry name" value="PRK00529.1"/>
    <property type="match status" value="1"/>
</dbReference>
<dbReference type="PANTHER" id="PTHR30053">
    <property type="entry name" value="ELONGATION FACTOR P"/>
    <property type="match status" value="1"/>
</dbReference>
<dbReference type="PANTHER" id="PTHR30053:SF12">
    <property type="entry name" value="ELONGATION FACTOR P (EF-P) FAMILY PROTEIN"/>
    <property type="match status" value="1"/>
</dbReference>
<dbReference type="Pfam" id="PF01132">
    <property type="entry name" value="EFP"/>
    <property type="match status" value="1"/>
</dbReference>
<dbReference type="Pfam" id="PF08207">
    <property type="entry name" value="EFP_N"/>
    <property type="match status" value="1"/>
</dbReference>
<dbReference type="Pfam" id="PF09285">
    <property type="entry name" value="Elong-fact-P_C"/>
    <property type="match status" value="1"/>
</dbReference>
<dbReference type="PIRSF" id="PIRSF005901">
    <property type="entry name" value="EF-P"/>
    <property type="match status" value="1"/>
</dbReference>
<dbReference type="SMART" id="SM01185">
    <property type="entry name" value="EFP"/>
    <property type="match status" value="1"/>
</dbReference>
<dbReference type="SMART" id="SM00841">
    <property type="entry name" value="Elong-fact-P_C"/>
    <property type="match status" value="1"/>
</dbReference>
<dbReference type="SUPFAM" id="SSF50249">
    <property type="entry name" value="Nucleic acid-binding proteins"/>
    <property type="match status" value="2"/>
</dbReference>
<dbReference type="SUPFAM" id="SSF50104">
    <property type="entry name" value="Translation proteins SH3-like domain"/>
    <property type="match status" value="1"/>
</dbReference>
<dbReference type="PROSITE" id="PS01275">
    <property type="entry name" value="EFP"/>
    <property type="match status" value="1"/>
</dbReference>
<accession>A0L673</accession>
<feature type="chain" id="PRO_1000117901" description="Elongation factor P">
    <location>
        <begin position="1"/>
        <end position="187"/>
    </location>
</feature>
<sequence length="187" mass="21102">MLSHTEMKQGKRVLIDDQPWIIVKADFVKPGKGQAFTKIKVKNLMDGRVIERTFKSSDSVAKADVVDVEMQYLYNDGELYHFMNPATFEQVALSEKQVEECKKWLKENEVYEVTLWENRAINVVPPSFMILEITECEPGVRGDTVTGATKPAVVESGASIKVPLFVEIGARVKVDTRTGEYMERAKG</sequence>
<proteinExistence type="inferred from homology"/>
<comment type="function">
    <text evidence="1">Involved in peptide bond synthesis. Stimulates efficient translation and peptide-bond synthesis on native or reconstituted 70S ribosomes in vitro. Probably functions indirectly by altering the affinity of the ribosome for aminoacyl-tRNA, thus increasing their reactivity as acceptors for peptidyl transferase.</text>
</comment>
<comment type="pathway">
    <text evidence="1">Protein biosynthesis; polypeptide chain elongation.</text>
</comment>
<comment type="subcellular location">
    <subcellularLocation>
        <location evidence="1">Cytoplasm</location>
    </subcellularLocation>
</comment>
<comment type="similarity">
    <text evidence="1">Belongs to the elongation factor P family.</text>
</comment>
<gene>
    <name evidence="1" type="primary">efp</name>
    <name type="ordered locus">Mmc1_0948</name>
</gene>